<protein>
    <recommendedName>
        <fullName>Probable xyloglucan endotransglucosylase/hydrolase protein 18</fullName>
        <shortName>At-XTH18</shortName>
        <shortName>XTH-18</shortName>
        <ecNumber>2.4.1.207</ecNumber>
    </recommendedName>
</protein>
<keyword id="KW-0052">Apoplast</keyword>
<keyword id="KW-0134">Cell wall</keyword>
<keyword id="KW-0961">Cell wall biogenesis/degradation</keyword>
<keyword id="KW-1015">Disulfide bond</keyword>
<keyword id="KW-0325">Glycoprotein</keyword>
<keyword id="KW-0326">Glycosidase</keyword>
<keyword id="KW-0378">Hydrolase</keyword>
<keyword id="KW-1185">Reference proteome</keyword>
<keyword id="KW-0964">Secreted</keyword>
<keyword id="KW-0732">Signal</keyword>
<keyword id="KW-0808">Transferase</keyword>
<name>XTH18_ARATH</name>
<feature type="signal peptide" evidence="3">
    <location>
        <begin position="1"/>
        <end position="26"/>
    </location>
</feature>
<feature type="chain" id="PRO_0000011818" description="Probable xyloglucan endotransglucosylase/hydrolase protein 18">
    <location>
        <begin position="27"/>
        <end position="282"/>
    </location>
</feature>
<feature type="domain" description="GH16" evidence="4">
    <location>
        <begin position="27"/>
        <end position="218"/>
    </location>
</feature>
<feature type="active site" description="Nucleophile" evidence="5">
    <location>
        <position position="104"/>
    </location>
</feature>
<feature type="active site" description="Proton donor" evidence="5">
    <location>
        <position position="108"/>
    </location>
</feature>
<feature type="binding site" evidence="2">
    <location>
        <position position="108"/>
    </location>
    <ligand>
        <name>xyloglucan</name>
        <dbReference type="ChEBI" id="CHEBI:18233"/>
    </ligand>
</feature>
<feature type="binding site" evidence="2">
    <location>
        <begin position="121"/>
        <end position="123"/>
    </location>
    <ligand>
        <name>xyloglucan</name>
        <dbReference type="ChEBI" id="CHEBI:18233"/>
    </ligand>
</feature>
<feature type="binding site" evidence="2">
    <location>
        <begin position="131"/>
        <end position="133"/>
    </location>
    <ligand>
        <name>xyloglucan</name>
        <dbReference type="ChEBI" id="CHEBI:18233"/>
    </ligand>
</feature>
<feature type="binding site" evidence="2">
    <location>
        <begin position="197"/>
        <end position="198"/>
    </location>
    <ligand>
        <name>xyloglucan</name>
        <dbReference type="ChEBI" id="CHEBI:18233"/>
    </ligand>
</feature>
<feature type="binding site" evidence="2">
    <location>
        <position position="202"/>
    </location>
    <ligand>
        <name>xyloglucan</name>
        <dbReference type="ChEBI" id="CHEBI:18233"/>
    </ligand>
</feature>
<feature type="binding site" evidence="2">
    <location>
        <position position="272"/>
    </location>
    <ligand>
        <name>xyloglucan</name>
        <dbReference type="ChEBI" id="CHEBI:18233"/>
    </ligand>
</feature>
<feature type="site" description="Important for catalytic activity" evidence="2">
    <location>
        <position position="106"/>
    </location>
</feature>
<feature type="glycosylation site" description="N-linked (GlcNAc...) asparagine" evidence="3">
    <location>
        <position position="112"/>
    </location>
</feature>
<feature type="glycosylation site" description="N-linked (GlcNAc...) asparagine" evidence="3">
    <location>
        <position position="238"/>
    </location>
</feature>
<feature type="disulfide bond" evidence="2">
    <location>
        <begin position="226"/>
        <end position="235"/>
    </location>
</feature>
<feature type="disulfide bond" evidence="2">
    <location>
        <begin position="267"/>
        <end position="281"/>
    </location>
</feature>
<accession>Q9M0D2</accession>
<gene>
    <name type="primary">XTH18</name>
    <name type="ordered locus">At4g30280</name>
    <name type="ORF">F17I23.380</name>
</gene>
<proteinExistence type="evidence at transcript level"/>
<evidence type="ECO:0000250" key="1"/>
<evidence type="ECO:0000250" key="2">
    <source>
        <dbReference type="UniProtKB" id="Q8GZD5"/>
    </source>
</evidence>
<evidence type="ECO:0000255" key="3"/>
<evidence type="ECO:0000255" key="4">
    <source>
        <dbReference type="PROSITE-ProRule" id="PRU01098"/>
    </source>
</evidence>
<evidence type="ECO:0000255" key="5">
    <source>
        <dbReference type="PROSITE-ProRule" id="PRU10064"/>
    </source>
</evidence>
<evidence type="ECO:0000269" key="6">
    <source>
    </source>
</evidence>
<evidence type="ECO:0000305" key="7"/>
<dbReference type="EC" id="2.4.1.207"/>
<dbReference type="EMBL" id="AF083779">
    <property type="protein sequence ID" value="AAN60337.1"/>
    <property type="molecule type" value="mRNA"/>
</dbReference>
<dbReference type="EMBL" id="AL161576">
    <property type="protein sequence ID" value="CAB81021.1"/>
    <property type="molecule type" value="Genomic_DNA"/>
</dbReference>
<dbReference type="EMBL" id="CP002687">
    <property type="protein sequence ID" value="AEE85746.1"/>
    <property type="molecule type" value="Genomic_DNA"/>
</dbReference>
<dbReference type="EMBL" id="AF419549">
    <property type="protein sequence ID" value="AAL31883.1"/>
    <property type="molecule type" value="mRNA"/>
</dbReference>
<dbReference type="EMBL" id="AY097337">
    <property type="protein sequence ID" value="AAM19853.1"/>
    <property type="molecule type" value="mRNA"/>
</dbReference>
<dbReference type="EMBL" id="AY085267">
    <property type="protein sequence ID" value="AAM62499.1"/>
    <property type="molecule type" value="mRNA"/>
</dbReference>
<dbReference type="PIR" id="A85354">
    <property type="entry name" value="A85354"/>
</dbReference>
<dbReference type="RefSeq" id="NP_194757.1">
    <property type="nucleotide sequence ID" value="NM_119174.2"/>
</dbReference>
<dbReference type="SMR" id="Q9M0D2"/>
<dbReference type="FunCoup" id="Q9M0D2">
    <property type="interactions" value="31"/>
</dbReference>
<dbReference type="STRING" id="3702.Q9M0D2"/>
<dbReference type="CAZy" id="GH16">
    <property type="family name" value="Glycoside Hydrolase Family 16"/>
</dbReference>
<dbReference type="GlyCosmos" id="Q9M0D2">
    <property type="glycosylation" value="2 sites, No reported glycans"/>
</dbReference>
<dbReference type="GlyGen" id="Q9M0D2">
    <property type="glycosylation" value="2 sites"/>
</dbReference>
<dbReference type="PaxDb" id="3702-AT4G30280.1"/>
<dbReference type="ProteomicsDB" id="242412"/>
<dbReference type="EnsemblPlants" id="AT4G30280.1">
    <property type="protein sequence ID" value="AT4G30280.1"/>
    <property type="gene ID" value="AT4G30280"/>
</dbReference>
<dbReference type="GeneID" id="829151"/>
<dbReference type="Gramene" id="AT4G30280.1">
    <property type="protein sequence ID" value="AT4G30280.1"/>
    <property type="gene ID" value="AT4G30280"/>
</dbReference>
<dbReference type="KEGG" id="ath:AT4G30280"/>
<dbReference type="Araport" id="AT4G30280"/>
<dbReference type="TAIR" id="AT4G30280">
    <property type="gene designation" value="XTH18"/>
</dbReference>
<dbReference type="eggNOG" id="ENOG502QQ71">
    <property type="taxonomic scope" value="Eukaryota"/>
</dbReference>
<dbReference type="HOGENOM" id="CLU_048041_0_0_1"/>
<dbReference type="InParanoid" id="Q9M0D2"/>
<dbReference type="OMA" id="GDNRANI"/>
<dbReference type="OrthoDB" id="4781at2759"/>
<dbReference type="PhylomeDB" id="Q9M0D2"/>
<dbReference type="BioCyc" id="ARA:AT4G30280-MONOMER"/>
<dbReference type="BRENDA" id="2.4.1.207">
    <property type="organism ID" value="399"/>
</dbReference>
<dbReference type="CD-CODE" id="4299E36E">
    <property type="entry name" value="Nucleolus"/>
</dbReference>
<dbReference type="PRO" id="PR:Q9M0D2"/>
<dbReference type="Proteomes" id="UP000006548">
    <property type="component" value="Chromosome 4"/>
</dbReference>
<dbReference type="ExpressionAtlas" id="Q9M0D2">
    <property type="expression patterns" value="baseline and differential"/>
</dbReference>
<dbReference type="GO" id="GO:0048046">
    <property type="term" value="C:apoplast"/>
    <property type="evidence" value="ECO:0007669"/>
    <property type="project" value="UniProtKB-SubCell"/>
</dbReference>
<dbReference type="GO" id="GO:0005794">
    <property type="term" value="C:Golgi apparatus"/>
    <property type="evidence" value="ECO:0007005"/>
    <property type="project" value="TAIR"/>
</dbReference>
<dbReference type="GO" id="GO:0004553">
    <property type="term" value="F:hydrolase activity, hydrolyzing O-glycosyl compounds"/>
    <property type="evidence" value="ECO:0007669"/>
    <property type="project" value="InterPro"/>
</dbReference>
<dbReference type="GO" id="GO:0030247">
    <property type="term" value="F:polysaccharide binding"/>
    <property type="evidence" value="ECO:0000250"/>
    <property type="project" value="UniProtKB"/>
</dbReference>
<dbReference type="GO" id="GO:0016762">
    <property type="term" value="F:xyloglucan:xyloglucosyl transferase activity"/>
    <property type="evidence" value="ECO:0000314"/>
    <property type="project" value="TAIR"/>
</dbReference>
<dbReference type="GO" id="GO:0042546">
    <property type="term" value="P:cell wall biogenesis"/>
    <property type="evidence" value="ECO:0007669"/>
    <property type="project" value="InterPro"/>
</dbReference>
<dbReference type="GO" id="GO:0071555">
    <property type="term" value="P:cell wall organization"/>
    <property type="evidence" value="ECO:0007669"/>
    <property type="project" value="UniProtKB-KW"/>
</dbReference>
<dbReference type="GO" id="GO:0071456">
    <property type="term" value="P:cellular response to hypoxia"/>
    <property type="evidence" value="ECO:0007007"/>
    <property type="project" value="TAIR"/>
</dbReference>
<dbReference type="GO" id="GO:0010411">
    <property type="term" value="P:xyloglucan metabolic process"/>
    <property type="evidence" value="ECO:0000314"/>
    <property type="project" value="TAIR"/>
</dbReference>
<dbReference type="FunFam" id="2.60.120.200:FF:000025">
    <property type="entry name" value="Xyloglucan endotransglucosylase/hydrolase"/>
    <property type="match status" value="1"/>
</dbReference>
<dbReference type="Gene3D" id="2.60.120.200">
    <property type="match status" value="1"/>
</dbReference>
<dbReference type="InterPro" id="IPR044791">
    <property type="entry name" value="Beta-glucanase/XTH"/>
</dbReference>
<dbReference type="InterPro" id="IPR008264">
    <property type="entry name" value="Beta_glucanase"/>
</dbReference>
<dbReference type="InterPro" id="IPR013320">
    <property type="entry name" value="ConA-like_dom_sf"/>
</dbReference>
<dbReference type="InterPro" id="IPR000757">
    <property type="entry name" value="GH16"/>
</dbReference>
<dbReference type="InterPro" id="IPR008263">
    <property type="entry name" value="GH16_AS"/>
</dbReference>
<dbReference type="InterPro" id="IPR010713">
    <property type="entry name" value="XET_C"/>
</dbReference>
<dbReference type="InterPro" id="IPR016455">
    <property type="entry name" value="XTH"/>
</dbReference>
<dbReference type="PANTHER" id="PTHR31062">
    <property type="entry name" value="XYLOGLUCAN ENDOTRANSGLUCOSYLASE/HYDROLASE PROTEIN 8-RELATED"/>
    <property type="match status" value="1"/>
</dbReference>
<dbReference type="Pfam" id="PF00722">
    <property type="entry name" value="Glyco_hydro_16"/>
    <property type="match status" value="1"/>
</dbReference>
<dbReference type="Pfam" id="PF06955">
    <property type="entry name" value="XET_C"/>
    <property type="match status" value="1"/>
</dbReference>
<dbReference type="PIRSF" id="PIRSF005604">
    <property type="entry name" value="XET"/>
    <property type="match status" value="1"/>
</dbReference>
<dbReference type="PRINTS" id="PR00737">
    <property type="entry name" value="GLHYDRLASE16"/>
</dbReference>
<dbReference type="SUPFAM" id="SSF49899">
    <property type="entry name" value="Concanavalin A-like lectins/glucanases"/>
    <property type="match status" value="1"/>
</dbReference>
<dbReference type="PROSITE" id="PS01034">
    <property type="entry name" value="GH16_1"/>
    <property type="match status" value="1"/>
</dbReference>
<dbReference type="PROSITE" id="PS51762">
    <property type="entry name" value="GH16_2"/>
    <property type="match status" value="1"/>
</dbReference>
<organism>
    <name type="scientific">Arabidopsis thaliana</name>
    <name type="common">Mouse-ear cress</name>
    <dbReference type="NCBI Taxonomy" id="3702"/>
    <lineage>
        <taxon>Eukaryota</taxon>
        <taxon>Viridiplantae</taxon>
        <taxon>Streptophyta</taxon>
        <taxon>Embryophyta</taxon>
        <taxon>Tracheophyta</taxon>
        <taxon>Spermatophyta</taxon>
        <taxon>Magnoliopsida</taxon>
        <taxon>eudicotyledons</taxon>
        <taxon>Gunneridae</taxon>
        <taxon>Pentapetalae</taxon>
        <taxon>rosids</taxon>
        <taxon>malvids</taxon>
        <taxon>Brassicales</taxon>
        <taxon>Brassicaceae</taxon>
        <taxon>Camelineae</taxon>
        <taxon>Arabidopsis</taxon>
    </lineage>
</organism>
<reference key="1">
    <citation type="submission" date="1998-08" db="EMBL/GenBank/DDBJ databases">
        <title>Signal peptide selection derived cDNAs from Arabidopsis thaliana leaves and guard cells.</title>
        <authorList>
            <person name="Stracke R."/>
            <person name="Palme K."/>
        </authorList>
    </citation>
    <scope>NUCLEOTIDE SEQUENCE [LARGE SCALE MRNA]</scope>
</reference>
<reference key="2">
    <citation type="journal article" date="1999" name="Nature">
        <title>Sequence and analysis of chromosome 4 of the plant Arabidopsis thaliana.</title>
        <authorList>
            <person name="Mayer K.F.X."/>
            <person name="Schueller C."/>
            <person name="Wambutt R."/>
            <person name="Murphy G."/>
            <person name="Volckaert G."/>
            <person name="Pohl T."/>
            <person name="Duesterhoeft A."/>
            <person name="Stiekema W."/>
            <person name="Entian K.-D."/>
            <person name="Terryn N."/>
            <person name="Harris B."/>
            <person name="Ansorge W."/>
            <person name="Brandt P."/>
            <person name="Grivell L.A."/>
            <person name="Rieger M."/>
            <person name="Weichselgartner M."/>
            <person name="de Simone V."/>
            <person name="Obermaier B."/>
            <person name="Mache R."/>
            <person name="Mueller M."/>
            <person name="Kreis M."/>
            <person name="Delseny M."/>
            <person name="Puigdomenech P."/>
            <person name="Watson M."/>
            <person name="Schmidtheini T."/>
            <person name="Reichert B."/>
            <person name="Portetelle D."/>
            <person name="Perez-Alonso M."/>
            <person name="Boutry M."/>
            <person name="Bancroft I."/>
            <person name="Vos P."/>
            <person name="Hoheisel J."/>
            <person name="Zimmermann W."/>
            <person name="Wedler H."/>
            <person name="Ridley P."/>
            <person name="Langham S.-A."/>
            <person name="McCullagh B."/>
            <person name="Bilham L."/>
            <person name="Robben J."/>
            <person name="van der Schueren J."/>
            <person name="Grymonprez B."/>
            <person name="Chuang Y.-J."/>
            <person name="Vandenbussche F."/>
            <person name="Braeken M."/>
            <person name="Weltjens I."/>
            <person name="Voet M."/>
            <person name="Bastiaens I."/>
            <person name="Aert R."/>
            <person name="Defoor E."/>
            <person name="Weitzenegger T."/>
            <person name="Bothe G."/>
            <person name="Ramsperger U."/>
            <person name="Hilbert H."/>
            <person name="Braun M."/>
            <person name="Holzer E."/>
            <person name="Brandt A."/>
            <person name="Peters S."/>
            <person name="van Staveren M."/>
            <person name="Dirkse W."/>
            <person name="Mooijman P."/>
            <person name="Klein Lankhorst R."/>
            <person name="Rose M."/>
            <person name="Hauf J."/>
            <person name="Koetter P."/>
            <person name="Berneiser S."/>
            <person name="Hempel S."/>
            <person name="Feldpausch M."/>
            <person name="Lamberth S."/>
            <person name="Van den Daele H."/>
            <person name="De Keyser A."/>
            <person name="Buysshaert C."/>
            <person name="Gielen J."/>
            <person name="Villarroel R."/>
            <person name="De Clercq R."/>
            <person name="van Montagu M."/>
            <person name="Rogers J."/>
            <person name="Cronin A."/>
            <person name="Quail M.A."/>
            <person name="Bray-Allen S."/>
            <person name="Clark L."/>
            <person name="Doggett J."/>
            <person name="Hall S."/>
            <person name="Kay M."/>
            <person name="Lennard N."/>
            <person name="McLay K."/>
            <person name="Mayes R."/>
            <person name="Pettett A."/>
            <person name="Rajandream M.A."/>
            <person name="Lyne M."/>
            <person name="Benes V."/>
            <person name="Rechmann S."/>
            <person name="Borkova D."/>
            <person name="Bloecker H."/>
            <person name="Scharfe M."/>
            <person name="Grimm M."/>
            <person name="Loehnert T.-H."/>
            <person name="Dose S."/>
            <person name="de Haan M."/>
            <person name="Maarse A.C."/>
            <person name="Schaefer M."/>
            <person name="Mueller-Auer S."/>
            <person name="Gabel C."/>
            <person name="Fuchs M."/>
            <person name="Fartmann B."/>
            <person name="Granderath K."/>
            <person name="Dauner D."/>
            <person name="Herzl A."/>
            <person name="Neumann S."/>
            <person name="Argiriou A."/>
            <person name="Vitale D."/>
            <person name="Liguori R."/>
            <person name="Piravandi E."/>
            <person name="Massenet O."/>
            <person name="Quigley F."/>
            <person name="Clabauld G."/>
            <person name="Muendlein A."/>
            <person name="Felber R."/>
            <person name="Schnabl S."/>
            <person name="Hiller R."/>
            <person name="Schmidt W."/>
            <person name="Lecharny A."/>
            <person name="Aubourg S."/>
            <person name="Chefdor F."/>
            <person name="Cooke R."/>
            <person name="Berger C."/>
            <person name="Monfort A."/>
            <person name="Casacuberta E."/>
            <person name="Gibbons T."/>
            <person name="Weber N."/>
            <person name="Vandenbol M."/>
            <person name="Bargues M."/>
            <person name="Terol J."/>
            <person name="Torres A."/>
            <person name="Perez-Perez A."/>
            <person name="Purnelle B."/>
            <person name="Bent E."/>
            <person name="Johnson S."/>
            <person name="Tacon D."/>
            <person name="Jesse T."/>
            <person name="Heijnen L."/>
            <person name="Schwarz S."/>
            <person name="Scholler P."/>
            <person name="Heber S."/>
            <person name="Francs P."/>
            <person name="Bielke C."/>
            <person name="Frishman D."/>
            <person name="Haase D."/>
            <person name="Lemcke K."/>
            <person name="Mewes H.-W."/>
            <person name="Stocker S."/>
            <person name="Zaccaria P."/>
            <person name="Bevan M."/>
            <person name="Wilson R.K."/>
            <person name="de la Bastide M."/>
            <person name="Habermann K."/>
            <person name="Parnell L."/>
            <person name="Dedhia N."/>
            <person name="Gnoj L."/>
            <person name="Schutz K."/>
            <person name="Huang E."/>
            <person name="Spiegel L."/>
            <person name="Sekhon M."/>
            <person name="Murray J."/>
            <person name="Sheet P."/>
            <person name="Cordes M."/>
            <person name="Abu-Threideh J."/>
            <person name="Stoneking T."/>
            <person name="Kalicki J."/>
            <person name="Graves T."/>
            <person name="Harmon G."/>
            <person name="Edwards J."/>
            <person name="Latreille P."/>
            <person name="Courtney L."/>
            <person name="Cloud J."/>
            <person name="Abbott A."/>
            <person name="Scott K."/>
            <person name="Johnson D."/>
            <person name="Minx P."/>
            <person name="Bentley D."/>
            <person name="Fulton B."/>
            <person name="Miller N."/>
            <person name="Greco T."/>
            <person name="Kemp K."/>
            <person name="Kramer J."/>
            <person name="Fulton L."/>
            <person name="Mardis E."/>
            <person name="Dante M."/>
            <person name="Pepin K."/>
            <person name="Hillier L.W."/>
            <person name="Nelson J."/>
            <person name="Spieth J."/>
            <person name="Ryan E."/>
            <person name="Andrews S."/>
            <person name="Geisel C."/>
            <person name="Layman D."/>
            <person name="Du H."/>
            <person name="Ali J."/>
            <person name="Berghoff A."/>
            <person name="Jones K."/>
            <person name="Drone K."/>
            <person name="Cotton M."/>
            <person name="Joshu C."/>
            <person name="Antonoiu B."/>
            <person name="Zidanic M."/>
            <person name="Strong C."/>
            <person name="Sun H."/>
            <person name="Lamar B."/>
            <person name="Yordan C."/>
            <person name="Ma P."/>
            <person name="Zhong J."/>
            <person name="Preston R."/>
            <person name="Vil D."/>
            <person name="Shekher M."/>
            <person name="Matero A."/>
            <person name="Shah R."/>
            <person name="Swaby I.K."/>
            <person name="O'Shaughnessy A."/>
            <person name="Rodriguez M."/>
            <person name="Hoffman J."/>
            <person name="Till S."/>
            <person name="Granat S."/>
            <person name="Shohdy N."/>
            <person name="Hasegawa A."/>
            <person name="Hameed A."/>
            <person name="Lodhi M."/>
            <person name="Johnson A."/>
            <person name="Chen E."/>
            <person name="Marra M.A."/>
            <person name="Martienssen R."/>
            <person name="McCombie W.R."/>
        </authorList>
    </citation>
    <scope>NUCLEOTIDE SEQUENCE [LARGE SCALE GENOMIC DNA]</scope>
    <source>
        <strain>cv. Columbia</strain>
    </source>
</reference>
<reference key="3">
    <citation type="journal article" date="2017" name="Plant J.">
        <title>Araport11: a complete reannotation of the Arabidopsis thaliana reference genome.</title>
        <authorList>
            <person name="Cheng C.Y."/>
            <person name="Krishnakumar V."/>
            <person name="Chan A.P."/>
            <person name="Thibaud-Nissen F."/>
            <person name="Schobel S."/>
            <person name="Town C.D."/>
        </authorList>
    </citation>
    <scope>GENOME REANNOTATION</scope>
    <source>
        <strain>cv. Columbia</strain>
    </source>
</reference>
<reference key="4">
    <citation type="journal article" date="2003" name="Science">
        <title>Empirical analysis of transcriptional activity in the Arabidopsis genome.</title>
        <authorList>
            <person name="Yamada K."/>
            <person name="Lim J."/>
            <person name="Dale J.M."/>
            <person name="Chen H."/>
            <person name="Shinn P."/>
            <person name="Palm C.J."/>
            <person name="Southwick A.M."/>
            <person name="Wu H.C."/>
            <person name="Kim C.J."/>
            <person name="Nguyen M."/>
            <person name="Pham P.K."/>
            <person name="Cheuk R.F."/>
            <person name="Karlin-Newmann G."/>
            <person name="Liu S.X."/>
            <person name="Lam B."/>
            <person name="Sakano H."/>
            <person name="Wu T."/>
            <person name="Yu G."/>
            <person name="Miranda M."/>
            <person name="Quach H.L."/>
            <person name="Tripp M."/>
            <person name="Chang C.H."/>
            <person name="Lee J.M."/>
            <person name="Toriumi M.J."/>
            <person name="Chan M.M."/>
            <person name="Tang C.C."/>
            <person name="Onodera C.S."/>
            <person name="Deng J.M."/>
            <person name="Akiyama K."/>
            <person name="Ansari Y."/>
            <person name="Arakawa T."/>
            <person name="Banh J."/>
            <person name="Banno F."/>
            <person name="Bowser L."/>
            <person name="Brooks S.Y."/>
            <person name="Carninci P."/>
            <person name="Chao Q."/>
            <person name="Choy N."/>
            <person name="Enju A."/>
            <person name="Goldsmith A.D."/>
            <person name="Gurjal M."/>
            <person name="Hansen N.F."/>
            <person name="Hayashizaki Y."/>
            <person name="Johnson-Hopson C."/>
            <person name="Hsuan V.W."/>
            <person name="Iida K."/>
            <person name="Karnes M."/>
            <person name="Khan S."/>
            <person name="Koesema E."/>
            <person name="Ishida J."/>
            <person name="Jiang P.X."/>
            <person name="Jones T."/>
            <person name="Kawai J."/>
            <person name="Kamiya A."/>
            <person name="Meyers C."/>
            <person name="Nakajima M."/>
            <person name="Narusaka M."/>
            <person name="Seki M."/>
            <person name="Sakurai T."/>
            <person name="Satou M."/>
            <person name="Tamse R."/>
            <person name="Vaysberg M."/>
            <person name="Wallender E.K."/>
            <person name="Wong C."/>
            <person name="Yamamura Y."/>
            <person name="Yuan S."/>
            <person name="Shinozaki K."/>
            <person name="Davis R.W."/>
            <person name="Theologis A."/>
            <person name="Ecker J.R."/>
        </authorList>
    </citation>
    <scope>NUCLEOTIDE SEQUENCE [LARGE SCALE MRNA]</scope>
    <source>
        <strain>cv. Columbia</strain>
    </source>
</reference>
<reference key="5">
    <citation type="submission" date="2002-03" db="EMBL/GenBank/DDBJ databases">
        <title>Full-length cDNA from Arabidopsis thaliana.</title>
        <authorList>
            <person name="Brover V.V."/>
            <person name="Troukhan M.E."/>
            <person name="Alexandrov N.A."/>
            <person name="Lu Y.-P."/>
            <person name="Flavell R.B."/>
            <person name="Feldmann K.A."/>
        </authorList>
    </citation>
    <scope>NUCLEOTIDE SEQUENCE [LARGE SCALE MRNA]</scope>
</reference>
<reference key="6">
    <citation type="journal article" date="2001" name="Plant Cell Physiol.">
        <title>A comprehensive expression analysis of all members of a gene family encoding cell-wall enzymes allowed us to predict cis-regulatory regions involved in cell-wall construction in specific organs of Arabidopsis.</title>
        <authorList>
            <person name="Yokoyama R."/>
            <person name="Nishitani K."/>
        </authorList>
    </citation>
    <scope>TISSUE SPECIFICITY</scope>
</reference>
<reference key="7">
    <citation type="journal article" date="2002" name="Plant Cell Physiol.">
        <title>The XTH family of enzymes involved in xyloglucan endotransglucosylation and endohydrolysis: current perspectives and a new unifying nomenclature.</title>
        <authorList>
            <person name="Rose J.K.C."/>
            <person name="Braam J."/>
            <person name="Fry S.C."/>
            <person name="Nishitani K."/>
        </authorList>
    </citation>
    <scope>NOMENCLATURE</scope>
</reference>
<sequence length="282" mass="32072">MKLSCGTSFAFLIMFLFAAQSMHVYAGSFHKDVQIHWGDGRGKVRDRDGKLLSLSLDKSSGSGFQSNQEFLYGKAEVQMKLVPGNSAGTVTTFYLKSPGTTWDEIDFEFLGNLSGHPYTLHTNVYTKGSGDKEQQFHLWFDPTVNFHTYCITWNPQRIIFTVDGIPIREFKNSESIGVPFPTKQPMRLYASLWEAEHWATRGGLEKTDWSKAPFTAFYRNYNVEGCVWANGKSSCPANSSWFTQQLDSNGQTRMKGVQSKYMVYNYCNDKRRFPRGVPVECS</sequence>
<comment type="function">
    <text evidence="1">Catalyzes xyloglucan endohydrolysis (XEH) and/or endotransglycosylation (XET). Cleaves and religates xyloglucan polymers, an essential constituent of the primary cell wall, and thereby participates in cell wall construction of growing tissues (By similarity).</text>
</comment>
<comment type="catalytic activity">
    <reaction>
        <text>breaks a beta-(1-&gt;4) bond in the backbone of a xyloglucan and transfers the xyloglucanyl segment on to O-4 of the non-reducing terminal glucose residue of an acceptor, which can be a xyloglucan or an oligosaccharide of xyloglucan.</text>
        <dbReference type="EC" id="2.4.1.207"/>
    </reaction>
</comment>
<comment type="subcellular location">
    <subcellularLocation>
        <location evidence="7">Secreted</location>
        <location evidence="7">Cell wall</location>
    </subcellularLocation>
    <subcellularLocation>
        <location evidence="7">Secreted</location>
        <location evidence="7">Extracellular space</location>
        <location evidence="7">Apoplast</location>
    </subcellularLocation>
</comment>
<comment type="tissue specificity">
    <text evidence="6">Root specific.</text>
</comment>
<comment type="PTM">
    <text evidence="1">Contains at least one intrachain disulfide bond essential for its enzymatic activity.</text>
</comment>
<comment type="similarity">
    <text evidence="7">Belongs to the glycosyl hydrolase 16 family. XTH group 2 subfamily.</text>
</comment>